<protein>
    <recommendedName>
        <fullName evidence="5">Diacyltrehalose acyltransferase Chp2</fullName>
        <ecNumber evidence="6">2.3.1.-</ecNumber>
    </recommendedName>
</protein>
<accession>O50440</accession>
<accession>I6XXB2</accession>
<accession>L0T7J5</accession>
<gene>
    <name evidence="4" type="primary">chp2</name>
    <name evidence="9" type="ordered locus">Rv1184c</name>
    <name evidence="8" type="ordered locus">RVBD_1184c</name>
    <name evidence="10" type="ORF">P425_01234</name>
</gene>
<sequence length="359" mass="37818">MKRVIAGAFAVWLVGWAGGFGTAIAASEPAYPWAPGPPPSPSPVGDASTAKVVYALGGARMPGIPWYEYTNQAGSQYFPNAKHDLIDYPAGAAFSWWPTMLLPPGSHQDNMTVGVAVKDGTNSLDNAIHHGTDPAAAVGLSQGSLVLDQEQARLANDPTAPAPDKLQFTTFGDPTGRHAFGASFLARIFPPGSHIPIPFIEYTMPQQVDSQYDTNHVVTAYDGFSDFPDRPDNLLAVANAAIGAAIAHTPIGFTGPGDVPPQNIRTTVNSRGATTTTYLVPVNHLPLTLPLRYLGMSDAEVDQIDSVLQPQIDAAYARNDNWFTRPVSVDPVRGLDPLTAPGSIVEGARGLLGSPAFGG</sequence>
<proteinExistence type="evidence at protein level"/>
<name>CHP2_MYCTU</name>
<keyword id="KW-0012">Acyltransferase</keyword>
<keyword id="KW-0997">Cell inner membrane</keyword>
<keyword id="KW-1003">Cell membrane</keyword>
<keyword id="KW-0444">Lipid biosynthesis</keyword>
<keyword id="KW-0443">Lipid metabolism</keyword>
<keyword id="KW-0472">Membrane</keyword>
<keyword id="KW-1185">Reference proteome</keyword>
<keyword id="KW-0808">Transferase</keyword>
<keyword id="KW-0812">Transmembrane</keyword>
<keyword id="KW-1133">Transmembrane helix</keyword>
<organism>
    <name type="scientific">Mycobacterium tuberculosis (strain ATCC 25618 / H37Rv)</name>
    <dbReference type="NCBI Taxonomy" id="83332"/>
    <lineage>
        <taxon>Bacteria</taxon>
        <taxon>Bacillati</taxon>
        <taxon>Actinomycetota</taxon>
        <taxon>Actinomycetes</taxon>
        <taxon>Mycobacteriales</taxon>
        <taxon>Mycobacteriaceae</taxon>
        <taxon>Mycobacterium</taxon>
        <taxon>Mycobacterium tuberculosis complex</taxon>
    </lineage>
</organism>
<reference key="1">
    <citation type="journal article" date="1998" name="Nature">
        <title>Deciphering the biology of Mycobacterium tuberculosis from the complete genome sequence.</title>
        <authorList>
            <person name="Cole S.T."/>
            <person name="Brosch R."/>
            <person name="Parkhill J."/>
            <person name="Garnier T."/>
            <person name="Churcher C.M."/>
            <person name="Harris D.E."/>
            <person name="Gordon S.V."/>
            <person name="Eiglmeier K."/>
            <person name="Gas S."/>
            <person name="Barry C.E. III"/>
            <person name="Tekaia F."/>
            <person name="Badcock K."/>
            <person name="Basham D."/>
            <person name="Brown D."/>
            <person name="Chillingworth T."/>
            <person name="Connor R."/>
            <person name="Davies R.M."/>
            <person name="Devlin K."/>
            <person name="Feltwell T."/>
            <person name="Gentles S."/>
            <person name="Hamlin N."/>
            <person name="Holroyd S."/>
            <person name="Hornsby T."/>
            <person name="Jagels K."/>
            <person name="Krogh A."/>
            <person name="McLean J."/>
            <person name="Moule S."/>
            <person name="Murphy L.D."/>
            <person name="Oliver S."/>
            <person name="Osborne J."/>
            <person name="Quail M.A."/>
            <person name="Rajandream M.A."/>
            <person name="Rogers J."/>
            <person name="Rutter S."/>
            <person name="Seeger K."/>
            <person name="Skelton S."/>
            <person name="Squares S."/>
            <person name="Squares R."/>
            <person name="Sulston J.E."/>
            <person name="Taylor K."/>
            <person name="Whitehead S."/>
            <person name="Barrell B.G."/>
        </authorList>
    </citation>
    <scope>NUCLEOTIDE SEQUENCE [LARGE SCALE GENOMIC DNA]</scope>
    <source>
        <strain>ATCC 25618 / H37Rv</strain>
    </source>
</reference>
<reference key="2">
    <citation type="submission" date="2013-11" db="EMBL/GenBank/DDBJ databases">
        <title>The genome sequence of Mycobacterium tuberculosis H37Rv.</title>
        <authorList>
            <consortium name="The Broad Institute Genome Sequencing Platform"/>
            <person name="Galagan J."/>
            <person name="Kreiswirth B."/>
            <person name="Dobos K."/>
            <person name="Fortune S."/>
            <person name="Fitzgerald M."/>
            <person name="Young S.K."/>
            <person name="Zeng Q."/>
            <person name="Gargeya S."/>
            <person name="Abouelleil A."/>
            <person name="Alvarado L."/>
            <person name="Berlin A.M."/>
            <person name="Chapman S.B."/>
            <person name="Gainer-Dewar J."/>
            <person name="Goldberg J."/>
            <person name="Gnerre S."/>
            <person name="Griggs A."/>
            <person name="Gujja S."/>
            <person name="Hansen M."/>
            <person name="Howarth C."/>
            <person name="Imamovic A."/>
            <person name="Larimer J."/>
            <person name="McCowan C."/>
            <person name="Murphy C."/>
            <person name="Pearson M."/>
            <person name="Poon T."/>
            <person name="Priest M."/>
            <person name="Roberts A."/>
            <person name="Saif S."/>
            <person name="Shea T."/>
            <person name="Sykes S."/>
            <person name="Wortman J."/>
            <person name="Nusbaum C."/>
            <person name="Birren B."/>
        </authorList>
    </citation>
    <scope>NUCLEOTIDE SEQUENCE [LARGE SCALE GENOMIC DNA]</scope>
    <source>
        <strain>ATCC 25618 / H37Rv</strain>
    </source>
</reference>
<reference key="3">
    <citation type="submission" date="2014-04" db="EMBL/GenBank/DDBJ databases">
        <title>The genome sequence of Mycobacterium tuberculosis H37Rv.</title>
        <authorList>
            <consortium name="The Broad Institute Genomics Platform"/>
            <consortium name="The Broad Institute Genome Sequencing Center for Infectious Disease"/>
            <person name="Earl A.M."/>
            <person name="Kreiswirth B."/>
            <person name="Gomez J."/>
            <person name="Victor T."/>
            <person name="Desjardins C."/>
            <person name="Abeel T."/>
            <person name="Young S."/>
            <person name="Zeng Q."/>
            <person name="Gargeya S."/>
            <person name="Abouelleil A."/>
            <person name="Alvarado L."/>
            <person name="Chapman S.B."/>
            <person name="Gainer-Dewar J."/>
            <person name="Goldberg J."/>
            <person name="Griggs A."/>
            <person name="Gujja S."/>
            <person name="Hansen M."/>
            <person name="Howarth C."/>
            <person name="Imamovic A."/>
            <person name="Larimer J."/>
            <person name="Murphy C."/>
            <person name="Naylor J."/>
            <person name="Pearson M."/>
            <person name="Poon T.W."/>
            <person name="Priest M."/>
            <person name="Roberts A."/>
            <person name="Saif S."/>
            <person name="Shea T."/>
            <person name="Sykes S."/>
            <person name="Wortman J."/>
            <person name="Nusbaum C."/>
            <person name="Birren B."/>
        </authorList>
    </citation>
    <scope>NUCLEOTIDE SEQUENCE [LARGE SCALE GENOMIC DNA]</scope>
    <source>
        <strain>ATCC 25618 / H37Rv</strain>
    </source>
</reference>
<reference key="4">
    <citation type="journal article" date="2011" name="Mol. Cell. Proteomics">
        <title>Proteogenomic analysis of Mycobacterium tuberculosis by high resolution mass spectrometry.</title>
        <authorList>
            <person name="Kelkar D.S."/>
            <person name="Kumar D."/>
            <person name="Kumar P."/>
            <person name="Balakrishnan L."/>
            <person name="Muthusamy B."/>
            <person name="Yadav A.K."/>
            <person name="Shrivastava P."/>
            <person name="Marimuthu A."/>
            <person name="Anand S."/>
            <person name="Sundaram H."/>
            <person name="Kingsbury R."/>
            <person name="Harsha H.C."/>
            <person name="Nair B."/>
            <person name="Prasad T.S."/>
            <person name="Chauhan D.S."/>
            <person name="Katoch K."/>
            <person name="Katoch V.M."/>
            <person name="Kumar P."/>
            <person name="Chaerkady R."/>
            <person name="Ramachandran S."/>
            <person name="Dash D."/>
            <person name="Pandey A."/>
        </authorList>
    </citation>
    <scope>IDENTIFICATION BY MASS SPECTROMETRY [LARGE SCALE ANALYSIS]</scope>
    <source>
        <strain>ATCC 25618 / H37Rv</strain>
    </source>
</reference>
<reference key="5">
    <citation type="journal article" date="2014" name="J. Biol. Chem.">
        <title>Biosynthesis and translocation of unsulfated acyltrehaloses in Mycobacterium tuberculosis.</title>
        <authorList>
            <person name="Belardinelli J.M."/>
            <person name="Larrouy-Maumus G."/>
            <person name="Jones V."/>
            <person name="Sorio de Carvalho L.P."/>
            <person name="McNeil M.R."/>
            <person name="Jackson M."/>
        </authorList>
    </citation>
    <scope>FUNCTION</scope>
    <scope>ACTIVITY REGULATION</scope>
    <scope>SUBCELLULAR LOCATION</scope>
    <scope>DISRUPTION PHENOTYPE</scope>
    <source>
        <strain>H37Rv</strain>
    </source>
</reference>
<reference key="6">
    <citation type="journal article" date="2015" name="J. Bacteriol.">
        <title>The rv1184c locus encodes Chp2, an acyltransferase in Mycobacterium tuberculosis polyacyltrehalose lipid biosynthesis.</title>
        <authorList>
            <person name="Touchette M.H."/>
            <person name="Holsclaw C.M."/>
            <person name="Previti M.L."/>
            <person name="Solomon V.C."/>
            <person name="Leary J.A."/>
            <person name="Bertozzi C.R."/>
            <person name="Seeliger J.C."/>
        </authorList>
    </citation>
    <scope>FUNCTION</scope>
    <scope>ACTIVITY REGULATION</scope>
    <scope>SUBCELLULAR LOCATION</scope>
    <scope>DISRUPTION PHENOTYPE</scope>
    <scope>MUTAGENESIS OF SER-141</scope>
    <source>
        <strain>ATCC 35801 / TMC 107 / Erdman</strain>
    </source>
</reference>
<feature type="chain" id="PRO_0000432824" description="Diacyltrehalose acyltransferase Chp2">
    <location>
        <begin position="1"/>
        <end position="359"/>
    </location>
</feature>
<feature type="transmembrane region" description="Helical" evidence="1">
    <location>
        <begin position="4"/>
        <end position="24"/>
    </location>
</feature>
<feature type="domain" description="PE-PPE" evidence="1">
    <location>
        <begin position="79"/>
        <end position="316"/>
    </location>
</feature>
<feature type="mutagenesis site" description="Lack of activity." evidence="3">
    <original>S</original>
    <variation>A</variation>
    <location>
        <position position="141"/>
    </location>
</feature>
<dbReference type="EC" id="2.3.1.-" evidence="6"/>
<dbReference type="EMBL" id="AL123456">
    <property type="protein sequence ID" value="CCP43940.1"/>
    <property type="molecule type" value="Genomic_DNA"/>
</dbReference>
<dbReference type="EMBL" id="CP003248">
    <property type="protein sequence ID" value="AFN49088.1"/>
    <property type="molecule type" value="Genomic_DNA"/>
</dbReference>
<dbReference type="EMBL" id="JLDD01000012">
    <property type="protein sequence ID" value="KBJ36430.1"/>
    <property type="molecule type" value="Genomic_DNA"/>
</dbReference>
<dbReference type="RefSeq" id="NP_215700.1">
    <property type="nucleotide sequence ID" value="NC_000962.3"/>
</dbReference>
<dbReference type="RefSeq" id="WP_003406195.1">
    <property type="nucleotide sequence ID" value="NZ_NVQJ01000025.1"/>
</dbReference>
<dbReference type="IntAct" id="O50440">
    <property type="interactions" value="12"/>
</dbReference>
<dbReference type="MINT" id="O50440"/>
<dbReference type="STRING" id="83332.Rv1184c"/>
<dbReference type="ESTHER" id="myctu-Rv1184c">
    <property type="family name" value="PE-PPE"/>
</dbReference>
<dbReference type="PaxDb" id="83332-Rv1184c"/>
<dbReference type="DNASU" id="886063"/>
<dbReference type="GeneID" id="45425155"/>
<dbReference type="GeneID" id="886063"/>
<dbReference type="KEGG" id="mtu:Rv1184c"/>
<dbReference type="KEGG" id="mtv:RVBD_1184c"/>
<dbReference type="PATRIC" id="fig|83332.111.peg.1324"/>
<dbReference type="TubercuList" id="Rv1184c"/>
<dbReference type="eggNOG" id="COG5651">
    <property type="taxonomic scope" value="Bacteria"/>
</dbReference>
<dbReference type="HOGENOM" id="CLU_061995_1_0_11"/>
<dbReference type="InParanoid" id="O50440"/>
<dbReference type="OrthoDB" id="5168602at2"/>
<dbReference type="PhylomeDB" id="O50440"/>
<dbReference type="BioCyc" id="MetaCyc:G185E-5353-MONOMER"/>
<dbReference type="BRENDA" id="2.3.1.284">
    <property type="organism ID" value="3445"/>
</dbReference>
<dbReference type="Proteomes" id="UP000001584">
    <property type="component" value="Chromosome"/>
</dbReference>
<dbReference type="GO" id="GO:0009274">
    <property type="term" value="C:peptidoglycan-based cell wall"/>
    <property type="evidence" value="ECO:0007005"/>
    <property type="project" value="MTBBASE"/>
</dbReference>
<dbReference type="GO" id="GO:0005886">
    <property type="term" value="C:plasma membrane"/>
    <property type="evidence" value="ECO:0007669"/>
    <property type="project" value="UniProtKB-SubCell"/>
</dbReference>
<dbReference type="GO" id="GO:0016746">
    <property type="term" value="F:acyltransferase activity"/>
    <property type="evidence" value="ECO:0007669"/>
    <property type="project" value="UniProtKB-KW"/>
</dbReference>
<dbReference type="GO" id="GO:0006629">
    <property type="term" value="P:lipid metabolic process"/>
    <property type="evidence" value="ECO:0007669"/>
    <property type="project" value="UniProtKB-KW"/>
</dbReference>
<dbReference type="InterPro" id="IPR013228">
    <property type="entry name" value="PE-PPE_C"/>
</dbReference>
<dbReference type="Pfam" id="PF08237">
    <property type="entry name" value="PE-PPE"/>
    <property type="match status" value="1"/>
</dbReference>
<evidence type="ECO:0000255" key="1"/>
<evidence type="ECO:0000269" key="2">
    <source>
    </source>
</evidence>
<evidence type="ECO:0000269" key="3">
    <source>
    </source>
</evidence>
<evidence type="ECO:0000303" key="4">
    <source>
    </source>
</evidence>
<evidence type="ECO:0000305" key="5"/>
<evidence type="ECO:0000305" key="6">
    <source>
    </source>
</evidence>
<evidence type="ECO:0000305" key="7">
    <source>
    </source>
</evidence>
<evidence type="ECO:0000312" key="8">
    <source>
        <dbReference type="EMBL" id="AFN49088.1"/>
    </source>
</evidence>
<evidence type="ECO:0000312" key="9">
    <source>
        <dbReference type="EMBL" id="CCP43940.1"/>
    </source>
</evidence>
<evidence type="ECO:0000312" key="10">
    <source>
        <dbReference type="EMBL" id="KBJ36430.1"/>
    </source>
</evidence>
<comment type="function">
    <text evidence="2 3">Involved in the final steps of polyacyltrehalose (PAT) biosynthesis. Catalyzes the transfer of three mycolipenoyl groups onto diacyltrehalose (DAT) to form PAT.</text>
</comment>
<comment type="activity regulation">
    <text evidence="2 3">Activity is probably potentiated by the DAT/PAT transporter MmpL10. Inhibited by the lipase inhibitor tetrahydrolipstatin (THL).</text>
</comment>
<comment type="subcellular location">
    <subcellularLocation>
        <location evidence="2 3">Cell inner membrane</location>
        <topology evidence="1">Single-pass membrane protein</topology>
    </subcellularLocation>
</comment>
<comment type="disruption phenotype">
    <text evidence="2 3">Mutant accumulates DAT in the cytoplasm and at the cell surface. Does not produce PAT.</text>
</comment>
<comment type="miscellaneous">
    <text evidence="6 7">The topology of this protein is unsure. According to PubMed:25124040, the C-terminal catalytic site is on the periplasmic side of the inner membrane. However, PubMed:25331437 authors conclude that Chp2 has the opposite topology, and that the C-terminal catalytic site is on the cytoplasmic side of the membrane.</text>
</comment>
<comment type="similarity">
    <text evidence="5">Belongs to the mycobacterial PPE family.</text>
</comment>